<feature type="chain" id="PRO_0000119476" description="GTP cyclohydrolase 1">
    <location>
        <begin position="1"/>
        <end position="207"/>
    </location>
</feature>
<feature type="binding site" evidence="2">
    <location>
        <position position="88"/>
    </location>
    <ligand>
        <name>Zn(2+)</name>
        <dbReference type="ChEBI" id="CHEBI:29105"/>
    </ligand>
</feature>
<feature type="binding site" evidence="2">
    <location>
        <position position="91"/>
    </location>
    <ligand>
        <name>Zn(2+)</name>
        <dbReference type="ChEBI" id="CHEBI:29105"/>
    </ligand>
</feature>
<feature type="binding site" evidence="2">
    <location>
        <position position="162"/>
    </location>
    <ligand>
        <name>Zn(2+)</name>
        <dbReference type="ChEBI" id="CHEBI:29105"/>
    </ligand>
</feature>
<proteinExistence type="inferred from homology"/>
<comment type="catalytic activity">
    <reaction evidence="2">
        <text>GTP + H2O = 7,8-dihydroneopterin 3'-triphosphate + formate + H(+)</text>
        <dbReference type="Rhea" id="RHEA:17473"/>
        <dbReference type="ChEBI" id="CHEBI:15377"/>
        <dbReference type="ChEBI" id="CHEBI:15378"/>
        <dbReference type="ChEBI" id="CHEBI:15740"/>
        <dbReference type="ChEBI" id="CHEBI:37565"/>
        <dbReference type="ChEBI" id="CHEBI:58462"/>
        <dbReference type="EC" id="3.5.4.16"/>
    </reaction>
</comment>
<comment type="pathway">
    <text evidence="2">Cofactor biosynthesis; 7,8-dihydroneopterin triphosphate biosynthesis; 7,8-dihydroneopterin triphosphate from GTP: step 1/1.</text>
</comment>
<comment type="subunit">
    <text evidence="1">Toroid-shaped homodecamer, composed of two pentamers of five dimers.</text>
</comment>
<comment type="similarity">
    <text evidence="2">Belongs to the GTP cyclohydrolase I family.</text>
</comment>
<reference key="1">
    <citation type="journal article" date="2001" name="DNA Res.">
        <title>Complete genome sequence of an aerobic thermoacidophilic Crenarchaeon, Sulfolobus tokodaii strain7.</title>
        <authorList>
            <person name="Kawarabayasi Y."/>
            <person name="Hino Y."/>
            <person name="Horikawa H."/>
            <person name="Jin-no K."/>
            <person name="Takahashi M."/>
            <person name="Sekine M."/>
            <person name="Baba S."/>
            <person name="Ankai A."/>
            <person name="Kosugi H."/>
            <person name="Hosoyama A."/>
            <person name="Fukui S."/>
            <person name="Nagai Y."/>
            <person name="Nishijima K."/>
            <person name="Otsuka R."/>
            <person name="Nakazawa H."/>
            <person name="Takamiya M."/>
            <person name="Kato Y."/>
            <person name="Yoshizawa T."/>
            <person name="Tanaka T."/>
            <person name="Kudoh Y."/>
            <person name="Yamazaki J."/>
            <person name="Kushida N."/>
            <person name="Oguchi A."/>
            <person name="Aoki K."/>
            <person name="Masuda S."/>
            <person name="Yanagii M."/>
            <person name="Nishimura M."/>
            <person name="Yamagishi A."/>
            <person name="Oshima T."/>
            <person name="Kikuchi H."/>
        </authorList>
    </citation>
    <scope>NUCLEOTIDE SEQUENCE [LARGE SCALE GENOMIC DNA]</scope>
    <source>
        <strain>DSM 16993 / JCM 10545 / NBRC 100140 / 7</strain>
    </source>
</reference>
<evidence type="ECO:0000250" key="1"/>
<evidence type="ECO:0000255" key="2">
    <source>
        <dbReference type="HAMAP-Rule" id="MF_00223"/>
    </source>
</evidence>
<keyword id="KW-0342">GTP-binding</keyword>
<keyword id="KW-0378">Hydrolase</keyword>
<keyword id="KW-0479">Metal-binding</keyword>
<keyword id="KW-0547">Nucleotide-binding</keyword>
<keyword id="KW-0554">One-carbon metabolism</keyword>
<keyword id="KW-1185">Reference proteome</keyword>
<keyword id="KW-0862">Zinc</keyword>
<gene>
    <name evidence="2" type="primary">folE</name>
    <name type="ordered locus">STK_13850</name>
</gene>
<accession>Q971G9</accession>
<accession>F9VP43</accession>
<protein>
    <recommendedName>
        <fullName evidence="2">GTP cyclohydrolase 1</fullName>
        <ecNumber evidence="2">3.5.4.16</ecNumber>
    </recommendedName>
    <alternativeName>
        <fullName evidence="2">GTP cyclohydrolase I</fullName>
        <shortName evidence="2">GTP-CH-I</shortName>
    </alternativeName>
</protein>
<organism>
    <name type="scientific">Sulfurisphaera tokodaii (strain DSM 16993 / JCM 10545 / NBRC 100140 / 7)</name>
    <name type="common">Sulfolobus tokodaii</name>
    <dbReference type="NCBI Taxonomy" id="273063"/>
    <lineage>
        <taxon>Archaea</taxon>
        <taxon>Thermoproteota</taxon>
        <taxon>Thermoprotei</taxon>
        <taxon>Sulfolobales</taxon>
        <taxon>Sulfolobaceae</taxon>
        <taxon>Sulfurisphaera</taxon>
    </lineage>
</organism>
<name>GCH1_SULTO</name>
<sequence length="207" mass="23434">MEETLNQEKMVEEIAKRIREILEILGENPDREGLRETPLRVARALLEMTSGLRTPQPQIKTFNLSEDGISEVEDQIILVKNIGFSSLCEHHLLPIIGKVHVAYIVGQERKVAGFSKIIRIVNYYASRPQIQERLVQQIADAIMNSDIHPKGVMVIGDALHMCAYVRGVKDREASLLSVATRGLFKNNVSLRNYVFRLLETSKKTSLL</sequence>
<dbReference type="EC" id="3.5.4.16" evidence="2"/>
<dbReference type="EMBL" id="BA000023">
    <property type="protein sequence ID" value="BAK54551.1"/>
    <property type="molecule type" value="Genomic_DNA"/>
</dbReference>
<dbReference type="RefSeq" id="WP_052846960.1">
    <property type="nucleotide sequence ID" value="NC_003106.2"/>
</dbReference>
<dbReference type="SMR" id="Q971G9"/>
<dbReference type="STRING" id="273063.STK_13850"/>
<dbReference type="GeneID" id="54123272"/>
<dbReference type="KEGG" id="sto:STK_13850"/>
<dbReference type="PATRIC" id="fig|273063.9.peg.1585"/>
<dbReference type="eggNOG" id="arCOG04542">
    <property type="taxonomic scope" value="Archaea"/>
</dbReference>
<dbReference type="OrthoDB" id="8438at2157"/>
<dbReference type="UniPathway" id="UPA00848">
    <property type="reaction ID" value="UER00151"/>
</dbReference>
<dbReference type="Proteomes" id="UP000001015">
    <property type="component" value="Chromosome"/>
</dbReference>
<dbReference type="GO" id="GO:0005737">
    <property type="term" value="C:cytoplasm"/>
    <property type="evidence" value="ECO:0007669"/>
    <property type="project" value="TreeGrafter"/>
</dbReference>
<dbReference type="GO" id="GO:0005525">
    <property type="term" value="F:GTP binding"/>
    <property type="evidence" value="ECO:0007669"/>
    <property type="project" value="UniProtKB-KW"/>
</dbReference>
<dbReference type="GO" id="GO:0003934">
    <property type="term" value="F:GTP cyclohydrolase I activity"/>
    <property type="evidence" value="ECO:0007669"/>
    <property type="project" value="UniProtKB-UniRule"/>
</dbReference>
<dbReference type="GO" id="GO:0008270">
    <property type="term" value="F:zinc ion binding"/>
    <property type="evidence" value="ECO:0007669"/>
    <property type="project" value="UniProtKB-UniRule"/>
</dbReference>
<dbReference type="GO" id="GO:0006730">
    <property type="term" value="P:one-carbon metabolic process"/>
    <property type="evidence" value="ECO:0007669"/>
    <property type="project" value="UniProtKB-UniRule"/>
</dbReference>
<dbReference type="GO" id="GO:0006729">
    <property type="term" value="P:tetrahydrobiopterin biosynthetic process"/>
    <property type="evidence" value="ECO:0007669"/>
    <property type="project" value="TreeGrafter"/>
</dbReference>
<dbReference type="GO" id="GO:0046654">
    <property type="term" value="P:tetrahydrofolate biosynthetic process"/>
    <property type="evidence" value="ECO:0007669"/>
    <property type="project" value="UniProtKB-UniRule"/>
</dbReference>
<dbReference type="FunFam" id="3.30.1130.10:FF:000001">
    <property type="entry name" value="GTP cyclohydrolase 1"/>
    <property type="match status" value="1"/>
</dbReference>
<dbReference type="Gene3D" id="1.10.286.10">
    <property type="match status" value="1"/>
</dbReference>
<dbReference type="Gene3D" id="3.30.1130.10">
    <property type="match status" value="1"/>
</dbReference>
<dbReference type="HAMAP" id="MF_00223">
    <property type="entry name" value="FolE"/>
    <property type="match status" value="1"/>
</dbReference>
<dbReference type="InterPro" id="IPR043133">
    <property type="entry name" value="GTP-CH-I_C/QueF"/>
</dbReference>
<dbReference type="InterPro" id="IPR043134">
    <property type="entry name" value="GTP-CH-I_N"/>
</dbReference>
<dbReference type="InterPro" id="IPR001474">
    <property type="entry name" value="GTP_CycHdrlase_I"/>
</dbReference>
<dbReference type="InterPro" id="IPR018234">
    <property type="entry name" value="GTP_CycHdrlase_I_CS"/>
</dbReference>
<dbReference type="InterPro" id="IPR020602">
    <property type="entry name" value="GTP_CycHdrlase_I_dom"/>
</dbReference>
<dbReference type="NCBIfam" id="NF006825">
    <property type="entry name" value="PRK09347.1-2"/>
    <property type="match status" value="1"/>
</dbReference>
<dbReference type="NCBIfam" id="NF006826">
    <property type="entry name" value="PRK09347.1-3"/>
    <property type="match status" value="1"/>
</dbReference>
<dbReference type="PANTHER" id="PTHR11109:SF7">
    <property type="entry name" value="GTP CYCLOHYDROLASE 1"/>
    <property type="match status" value="1"/>
</dbReference>
<dbReference type="PANTHER" id="PTHR11109">
    <property type="entry name" value="GTP CYCLOHYDROLASE I"/>
    <property type="match status" value="1"/>
</dbReference>
<dbReference type="Pfam" id="PF01227">
    <property type="entry name" value="GTP_cyclohydroI"/>
    <property type="match status" value="1"/>
</dbReference>
<dbReference type="SUPFAM" id="SSF55620">
    <property type="entry name" value="Tetrahydrobiopterin biosynthesis enzymes-like"/>
    <property type="match status" value="1"/>
</dbReference>
<dbReference type="PROSITE" id="PS00859">
    <property type="entry name" value="GTP_CYCLOHYDROL_1_1"/>
    <property type="match status" value="1"/>
</dbReference>
<dbReference type="PROSITE" id="PS00860">
    <property type="entry name" value="GTP_CYCLOHYDROL_1_2"/>
    <property type="match status" value="1"/>
</dbReference>